<dbReference type="EMBL" id="CP000393">
    <property type="protein sequence ID" value="ABG52150.1"/>
    <property type="molecule type" value="Genomic_DNA"/>
</dbReference>
<dbReference type="RefSeq" id="WP_011612505.1">
    <property type="nucleotide sequence ID" value="NC_008312.1"/>
</dbReference>
<dbReference type="SMR" id="Q110C4"/>
<dbReference type="STRING" id="203124.Tery_2995"/>
<dbReference type="KEGG" id="ter:Tery_2995"/>
<dbReference type="eggNOG" id="COG0200">
    <property type="taxonomic scope" value="Bacteria"/>
</dbReference>
<dbReference type="HOGENOM" id="CLU_055188_4_2_3"/>
<dbReference type="OrthoDB" id="9810293at2"/>
<dbReference type="GO" id="GO:0022625">
    <property type="term" value="C:cytosolic large ribosomal subunit"/>
    <property type="evidence" value="ECO:0007669"/>
    <property type="project" value="TreeGrafter"/>
</dbReference>
<dbReference type="GO" id="GO:0019843">
    <property type="term" value="F:rRNA binding"/>
    <property type="evidence" value="ECO:0007669"/>
    <property type="project" value="UniProtKB-UniRule"/>
</dbReference>
<dbReference type="GO" id="GO:0003735">
    <property type="term" value="F:structural constituent of ribosome"/>
    <property type="evidence" value="ECO:0007669"/>
    <property type="project" value="InterPro"/>
</dbReference>
<dbReference type="GO" id="GO:0006412">
    <property type="term" value="P:translation"/>
    <property type="evidence" value="ECO:0007669"/>
    <property type="project" value="UniProtKB-UniRule"/>
</dbReference>
<dbReference type="Gene3D" id="3.100.10.10">
    <property type="match status" value="1"/>
</dbReference>
<dbReference type="HAMAP" id="MF_01341">
    <property type="entry name" value="Ribosomal_uL15"/>
    <property type="match status" value="1"/>
</dbReference>
<dbReference type="InterPro" id="IPR030878">
    <property type="entry name" value="Ribosomal_uL15"/>
</dbReference>
<dbReference type="InterPro" id="IPR021131">
    <property type="entry name" value="Ribosomal_uL15/eL18"/>
</dbReference>
<dbReference type="InterPro" id="IPR036227">
    <property type="entry name" value="Ribosomal_uL15/eL18_sf"/>
</dbReference>
<dbReference type="InterPro" id="IPR005749">
    <property type="entry name" value="Ribosomal_uL15_bac-type"/>
</dbReference>
<dbReference type="InterPro" id="IPR001196">
    <property type="entry name" value="Ribosomal_uL15_CS"/>
</dbReference>
<dbReference type="NCBIfam" id="TIGR01071">
    <property type="entry name" value="rplO_bact"/>
    <property type="match status" value="1"/>
</dbReference>
<dbReference type="PANTHER" id="PTHR12934">
    <property type="entry name" value="50S RIBOSOMAL PROTEIN L15"/>
    <property type="match status" value="1"/>
</dbReference>
<dbReference type="PANTHER" id="PTHR12934:SF11">
    <property type="entry name" value="LARGE RIBOSOMAL SUBUNIT PROTEIN UL15M"/>
    <property type="match status" value="1"/>
</dbReference>
<dbReference type="Pfam" id="PF00828">
    <property type="entry name" value="Ribosomal_L27A"/>
    <property type="match status" value="1"/>
</dbReference>
<dbReference type="SUPFAM" id="SSF52080">
    <property type="entry name" value="Ribosomal proteins L15p and L18e"/>
    <property type="match status" value="1"/>
</dbReference>
<dbReference type="PROSITE" id="PS00475">
    <property type="entry name" value="RIBOSOMAL_L15"/>
    <property type="match status" value="1"/>
</dbReference>
<name>RL15_TRIEI</name>
<organism>
    <name type="scientific">Trichodesmium erythraeum (strain IMS101)</name>
    <dbReference type="NCBI Taxonomy" id="203124"/>
    <lineage>
        <taxon>Bacteria</taxon>
        <taxon>Bacillati</taxon>
        <taxon>Cyanobacteriota</taxon>
        <taxon>Cyanophyceae</taxon>
        <taxon>Oscillatoriophycideae</taxon>
        <taxon>Oscillatoriales</taxon>
        <taxon>Microcoleaceae</taxon>
        <taxon>Trichodesmium</taxon>
    </lineage>
</organism>
<feature type="chain" id="PRO_1000054559" description="Large ribosomal subunit protein uL15">
    <location>
        <begin position="1"/>
        <end position="161"/>
    </location>
</feature>
<feature type="region of interest" description="Disordered" evidence="2">
    <location>
        <begin position="1"/>
        <end position="57"/>
    </location>
</feature>
<feature type="compositionally biased region" description="Gly residues" evidence="2">
    <location>
        <begin position="23"/>
        <end position="35"/>
    </location>
</feature>
<keyword id="KW-0687">Ribonucleoprotein</keyword>
<keyword id="KW-0689">Ribosomal protein</keyword>
<keyword id="KW-0694">RNA-binding</keyword>
<keyword id="KW-0699">rRNA-binding</keyword>
<proteinExistence type="inferred from homology"/>
<comment type="function">
    <text evidence="1">Binds to the 23S rRNA.</text>
</comment>
<comment type="subunit">
    <text evidence="1">Part of the 50S ribosomal subunit.</text>
</comment>
<comment type="similarity">
    <text evidence="1">Belongs to the universal ribosomal protein uL15 family.</text>
</comment>
<accession>Q110C4</accession>
<gene>
    <name evidence="1" type="primary">rplO</name>
    <name type="ordered locus">Tery_2995</name>
</gene>
<reference key="1">
    <citation type="journal article" date="2015" name="Proc. Natl. Acad. Sci. U.S.A.">
        <title>Trichodesmium genome maintains abundant, widespread noncoding DNA in situ, despite oligotrophic lifestyle.</title>
        <authorList>
            <person name="Walworth N."/>
            <person name="Pfreundt U."/>
            <person name="Nelson W.C."/>
            <person name="Mincer T."/>
            <person name="Heidelberg J.F."/>
            <person name="Fu F."/>
            <person name="Waterbury J.B."/>
            <person name="Glavina del Rio T."/>
            <person name="Goodwin L."/>
            <person name="Kyrpides N.C."/>
            <person name="Land M.L."/>
            <person name="Woyke T."/>
            <person name="Hutchins D.A."/>
            <person name="Hess W.R."/>
            <person name="Webb E.A."/>
        </authorList>
    </citation>
    <scope>NUCLEOTIDE SEQUENCE [LARGE SCALE GENOMIC DNA]</scope>
    <source>
        <strain>IMS101</strain>
    </source>
</reference>
<evidence type="ECO:0000255" key="1">
    <source>
        <dbReference type="HAMAP-Rule" id="MF_01341"/>
    </source>
</evidence>
<evidence type="ECO:0000256" key="2">
    <source>
        <dbReference type="SAM" id="MobiDB-lite"/>
    </source>
</evidence>
<evidence type="ECO:0000305" key="3"/>
<protein>
    <recommendedName>
        <fullName evidence="1">Large ribosomal subunit protein uL15</fullName>
    </recommendedName>
    <alternativeName>
        <fullName evidence="3">50S ribosomal protein L15</fullName>
    </alternativeName>
</protein>
<sequence length="161" mass="16929">MRLKDAIPKKGSQQRGRRVGRGISAGQGASCGKGMRGQKSRSGGSTRPGFEGGQNPLYRRLPKLKGFPMVNRKKYTIINVSKLSSLPANTEVTLASLIKVGIITTDDGPLKILGDGDLNIPLKVYAAAFTASARSKIEAAGGSCEEIGPAQAVSNEDSTKE</sequence>